<organism>
    <name type="scientific">Danio rerio</name>
    <name type="common">Zebrafish</name>
    <name type="synonym">Brachydanio rerio</name>
    <dbReference type="NCBI Taxonomy" id="7955"/>
    <lineage>
        <taxon>Eukaryota</taxon>
        <taxon>Metazoa</taxon>
        <taxon>Chordata</taxon>
        <taxon>Craniata</taxon>
        <taxon>Vertebrata</taxon>
        <taxon>Euteleostomi</taxon>
        <taxon>Actinopterygii</taxon>
        <taxon>Neopterygii</taxon>
        <taxon>Teleostei</taxon>
        <taxon>Ostariophysi</taxon>
        <taxon>Cypriniformes</taxon>
        <taxon>Danionidae</taxon>
        <taxon>Danioninae</taxon>
        <taxon>Danio</taxon>
    </lineage>
</organism>
<proteinExistence type="evidence at transcript level"/>
<dbReference type="EMBL" id="CR545466">
    <property type="protein sequence ID" value="CAI21305.1"/>
    <property type="status" value="ALT_INIT"/>
    <property type="molecule type" value="Genomic_DNA"/>
</dbReference>
<dbReference type="EMBL" id="BC090896">
    <property type="protein sequence ID" value="AAH90896.1"/>
    <property type="status" value="ALT_INIT"/>
    <property type="molecule type" value="mRNA"/>
</dbReference>
<dbReference type="RefSeq" id="NP_001013552.1">
    <property type="nucleotide sequence ID" value="NM_001013534.1"/>
</dbReference>
<dbReference type="FunCoup" id="Q5RFV8">
    <property type="interactions" value="1941"/>
</dbReference>
<dbReference type="STRING" id="7955.ENSDARP00000011821"/>
<dbReference type="PaxDb" id="7955-ENSDARP00000011821"/>
<dbReference type="GeneID" id="541407"/>
<dbReference type="KEGG" id="dre:541407"/>
<dbReference type="AGR" id="ZFIN:ZDB-GENE-050320-107"/>
<dbReference type="CTD" id="80304"/>
<dbReference type="ZFIN" id="ZDB-GENE-050320-107">
    <property type="gene designation" value="wdcp"/>
</dbReference>
<dbReference type="eggNOG" id="ENOG502QUUX">
    <property type="taxonomic scope" value="Eukaryota"/>
</dbReference>
<dbReference type="InParanoid" id="Q5RFV8"/>
<dbReference type="OrthoDB" id="6409262at2759"/>
<dbReference type="PhylomeDB" id="Q5RFV8"/>
<dbReference type="TreeFam" id="TF333528"/>
<dbReference type="PRO" id="PR:Q5RFV8"/>
<dbReference type="Proteomes" id="UP000000437">
    <property type="component" value="Chromosome 20"/>
</dbReference>
<dbReference type="GO" id="GO:0019900">
    <property type="term" value="F:kinase binding"/>
    <property type="evidence" value="ECO:0000318"/>
    <property type="project" value="GO_Central"/>
</dbReference>
<dbReference type="InterPro" id="IPR028041">
    <property type="entry name" value="WDCP"/>
</dbReference>
<dbReference type="PANTHER" id="PTHR14897">
    <property type="entry name" value="WD REPEAT AND COILED-COIL-CONTAINING PROTEIN"/>
    <property type="match status" value="1"/>
</dbReference>
<dbReference type="PANTHER" id="PTHR14897:SF5">
    <property type="entry name" value="WD REPEAT AND COILED-COIL-CONTAINING PROTEIN"/>
    <property type="match status" value="1"/>
</dbReference>
<dbReference type="Pfam" id="PF15390">
    <property type="entry name" value="WDCP"/>
    <property type="match status" value="1"/>
</dbReference>
<dbReference type="SUPFAM" id="SSF101908">
    <property type="entry name" value="Putative isomerase YbhE"/>
    <property type="match status" value="1"/>
</dbReference>
<comment type="sequence caution" evidence="3">
    <conflict type="erroneous initiation">
        <sequence resource="EMBL-CDS" id="AAH90896"/>
    </conflict>
</comment>
<comment type="sequence caution" evidence="3">
    <conflict type="erroneous initiation">
        <sequence resource="EMBL-CDS" id="CAI21305"/>
    </conflict>
</comment>
<gene>
    <name type="primary">wdcp</name>
    <name type="ORF">si:dkeyp-115a10.2</name>
    <name type="ORF">zgc:103511</name>
</gene>
<name>WDCP_DANRE</name>
<feature type="chain" id="PRO_0000299504" description="WD repeat and coiled-coil-containing protein">
    <location>
        <begin position="1"/>
        <end position="714"/>
    </location>
</feature>
<feature type="repeat" description="WD 1">
    <location>
        <begin position="55"/>
        <end position="98"/>
    </location>
</feature>
<feature type="repeat" description="WD 2">
    <location>
        <begin position="154"/>
        <end position="194"/>
    </location>
</feature>
<feature type="region of interest" description="Disordered" evidence="2">
    <location>
        <begin position="432"/>
        <end position="454"/>
    </location>
</feature>
<feature type="region of interest" description="Disordered" evidence="2">
    <location>
        <begin position="531"/>
        <end position="564"/>
    </location>
</feature>
<feature type="region of interest" description="Disordered" evidence="2">
    <location>
        <begin position="685"/>
        <end position="714"/>
    </location>
</feature>
<feature type="coiled-coil region" evidence="1">
    <location>
        <begin position="567"/>
        <end position="595"/>
    </location>
</feature>
<feature type="sequence conflict" description="In Ref. 2; AAH90896." evidence="3" ref="2">
    <original>V</original>
    <variation>A</variation>
    <location>
        <position position="23"/>
    </location>
</feature>
<feature type="sequence conflict" description="In Ref. 2; AAH90896." evidence="3" ref="2">
    <original>E</original>
    <variation>G</variation>
    <location>
        <position position="452"/>
    </location>
</feature>
<evidence type="ECO:0000255" key="1"/>
<evidence type="ECO:0000256" key="2">
    <source>
        <dbReference type="SAM" id="MobiDB-lite"/>
    </source>
</evidence>
<evidence type="ECO:0000305" key="3"/>
<sequence length="714" mass="79171">MELGKAKLLRTGLNTLHQAIHPVHGIAWTDGKQVCLTSLFSVEGEPKFGDTNVIGQFEHVLGLFWGPLCCSGSPALLAVQHKKHVTVWQLQLSALEQNKLLCTQTCEMSEPFPLLSQGCVWHPKMDVLAILTKRDASVLFSVRVDNRRVKADIKGSGLIHCACWTKDGTRLVVAIGSALHSYTWNDIQKSLVPCSFCPIFDVGGYICAIESTDEAQVAVATELPLDKICGLNAGMAFDLPNESEGLCRPSAALTVDTDYYLDRRRSCDSERSGHASSGPIDLTNLLAKHRKSDPSPLIHLRKRDNLTGTGQDSSHLILVTYERKVTTTRKVSIPGILVPDIIAFDPNGHTVAVASNTCNMILVYCITDSSMPNVQQIQLQKNERPKGVCFFTNKMLLFMIGRQKSNDPAFLPSSNTDKYILRLTAKELVFDEESTTKSESPSQHHGIRRHSENFTKEDRLSIKDLILPGGSVIVSPSSRRKLIEEVRSSDLSPVASSADFSDRASSASSVTLENYDMDHITRMASLAVAGQASRDSSRPCSPRYETSEKLYSDATPPKNSKEKNLEQLTQNMERIFTRFAEVQQCLSEIREFTQNGKKIACSYPSAYEPQYVHITCQKQLSENVYTDERRPLLLCGGRICLRVVQELFGLTVVEMMHGPMWITLVADADGFVPLTFKHKDELTIRSARRKSPARPPSGADDFPPESPKSPSMEK</sequence>
<keyword id="KW-0175">Coiled coil</keyword>
<keyword id="KW-1185">Reference proteome</keyword>
<keyword id="KW-0677">Repeat</keyword>
<keyword id="KW-0853">WD repeat</keyword>
<protein>
    <recommendedName>
        <fullName>WD repeat and coiled-coil-containing protein</fullName>
    </recommendedName>
</protein>
<reference key="1">
    <citation type="journal article" date="2013" name="Nature">
        <title>The zebrafish reference genome sequence and its relationship to the human genome.</title>
        <authorList>
            <person name="Howe K."/>
            <person name="Clark M.D."/>
            <person name="Torroja C.F."/>
            <person name="Torrance J."/>
            <person name="Berthelot C."/>
            <person name="Muffato M."/>
            <person name="Collins J.E."/>
            <person name="Humphray S."/>
            <person name="McLaren K."/>
            <person name="Matthews L."/>
            <person name="McLaren S."/>
            <person name="Sealy I."/>
            <person name="Caccamo M."/>
            <person name="Churcher C."/>
            <person name="Scott C."/>
            <person name="Barrett J.C."/>
            <person name="Koch R."/>
            <person name="Rauch G.J."/>
            <person name="White S."/>
            <person name="Chow W."/>
            <person name="Kilian B."/>
            <person name="Quintais L.T."/>
            <person name="Guerra-Assuncao J.A."/>
            <person name="Zhou Y."/>
            <person name="Gu Y."/>
            <person name="Yen J."/>
            <person name="Vogel J.H."/>
            <person name="Eyre T."/>
            <person name="Redmond S."/>
            <person name="Banerjee R."/>
            <person name="Chi J."/>
            <person name="Fu B."/>
            <person name="Langley E."/>
            <person name="Maguire S.F."/>
            <person name="Laird G.K."/>
            <person name="Lloyd D."/>
            <person name="Kenyon E."/>
            <person name="Donaldson S."/>
            <person name="Sehra H."/>
            <person name="Almeida-King J."/>
            <person name="Loveland J."/>
            <person name="Trevanion S."/>
            <person name="Jones M."/>
            <person name="Quail M."/>
            <person name="Willey D."/>
            <person name="Hunt A."/>
            <person name="Burton J."/>
            <person name="Sims S."/>
            <person name="McLay K."/>
            <person name="Plumb B."/>
            <person name="Davis J."/>
            <person name="Clee C."/>
            <person name="Oliver K."/>
            <person name="Clark R."/>
            <person name="Riddle C."/>
            <person name="Elliot D."/>
            <person name="Threadgold G."/>
            <person name="Harden G."/>
            <person name="Ware D."/>
            <person name="Begum S."/>
            <person name="Mortimore B."/>
            <person name="Kerry G."/>
            <person name="Heath P."/>
            <person name="Phillimore B."/>
            <person name="Tracey A."/>
            <person name="Corby N."/>
            <person name="Dunn M."/>
            <person name="Johnson C."/>
            <person name="Wood J."/>
            <person name="Clark S."/>
            <person name="Pelan S."/>
            <person name="Griffiths G."/>
            <person name="Smith M."/>
            <person name="Glithero R."/>
            <person name="Howden P."/>
            <person name="Barker N."/>
            <person name="Lloyd C."/>
            <person name="Stevens C."/>
            <person name="Harley J."/>
            <person name="Holt K."/>
            <person name="Panagiotidis G."/>
            <person name="Lovell J."/>
            <person name="Beasley H."/>
            <person name="Henderson C."/>
            <person name="Gordon D."/>
            <person name="Auger K."/>
            <person name="Wright D."/>
            <person name="Collins J."/>
            <person name="Raisen C."/>
            <person name="Dyer L."/>
            <person name="Leung K."/>
            <person name="Robertson L."/>
            <person name="Ambridge K."/>
            <person name="Leongamornlert D."/>
            <person name="McGuire S."/>
            <person name="Gilderthorp R."/>
            <person name="Griffiths C."/>
            <person name="Manthravadi D."/>
            <person name="Nichol S."/>
            <person name="Barker G."/>
            <person name="Whitehead S."/>
            <person name="Kay M."/>
            <person name="Brown J."/>
            <person name="Murnane C."/>
            <person name="Gray E."/>
            <person name="Humphries M."/>
            <person name="Sycamore N."/>
            <person name="Barker D."/>
            <person name="Saunders D."/>
            <person name="Wallis J."/>
            <person name="Babbage A."/>
            <person name="Hammond S."/>
            <person name="Mashreghi-Mohammadi M."/>
            <person name="Barr L."/>
            <person name="Martin S."/>
            <person name="Wray P."/>
            <person name="Ellington A."/>
            <person name="Matthews N."/>
            <person name="Ellwood M."/>
            <person name="Woodmansey R."/>
            <person name="Clark G."/>
            <person name="Cooper J."/>
            <person name="Tromans A."/>
            <person name="Grafham D."/>
            <person name="Skuce C."/>
            <person name="Pandian R."/>
            <person name="Andrews R."/>
            <person name="Harrison E."/>
            <person name="Kimberley A."/>
            <person name="Garnett J."/>
            <person name="Fosker N."/>
            <person name="Hall R."/>
            <person name="Garner P."/>
            <person name="Kelly D."/>
            <person name="Bird C."/>
            <person name="Palmer S."/>
            <person name="Gehring I."/>
            <person name="Berger A."/>
            <person name="Dooley C.M."/>
            <person name="Ersan-Urun Z."/>
            <person name="Eser C."/>
            <person name="Geiger H."/>
            <person name="Geisler M."/>
            <person name="Karotki L."/>
            <person name="Kirn A."/>
            <person name="Konantz J."/>
            <person name="Konantz M."/>
            <person name="Oberlander M."/>
            <person name="Rudolph-Geiger S."/>
            <person name="Teucke M."/>
            <person name="Lanz C."/>
            <person name="Raddatz G."/>
            <person name="Osoegawa K."/>
            <person name="Zhu B."/>
            <person name="Rapp A."/>
            <person name="Widaa S."/>
            <person name="Langford C."/>
            <person name="Yang F."/>
            <person name="Schuster S.C."/>
            <person name="Carter N.P."/>
            <person name="Harrow J."/>
            <person name="Ning Z."/>
            <person name="Herrero J."/>
            <person name="Searle S.M."/>
            <person name="Enright A."/>
            <person name="Geisler R."/>
            <person name="Plasterk R.H."/>
            <person name="Lee C."/>
            <person name="Westerfield M."/>
            <person name="de Jong P.J."/>
            <person name="Zon L.I."/>
            <person name="Postlethwait J.H."/>
            <person name="Nusslein-Volhard C."/>
            <person name="Hubbard T.J."/>
            <person name="Roest Crollius H."/>
            <person name="Rogers J."/>
            <person name="Stemple D.L."/>
        </authorList>
    </citation>
    <scope>NUCLEOTIDE SEQUENCE [LARGE SCALE GENOMIC DNA]</scope>
    <source>
        <strain>Tuebingen</strain>
    </source>
</reference>
<reference key="2">
    <citation type="submission" date="2005-03" db="EMBL/GenBank/DDBJ databases">
        <authorList>
            <consortium name="NIH - Zebrafish Gene Collection (ZGC) project"/>
        </authorList>
    </citation>
    <scope>NUCLEOTIDE SEQUENCE [LARGE SCALE MRNA]</scope>
    <source>
        <tissue>Ovary</tissue>
    </source>
</reference>
<accession>Q5RFV8</accession>
<accession>Q5BKX4</accession>